<protein>
    <recommendedName>
        <fullName evidence="1">Cytochrome c-type biogenesis protein CcmE</fullName>
    </recommendedName>
    <alternativeName>
        <fullName evidence="1">Cytochrome c maturation protein E</fullName>
    </alternativeName>
    <alternativeName>
        <fullName evidence="1">Heme chaperone CcmE</fullName>
    </alternativeName>
</protein>
<accession>B2K8K4</accession>
<reference key="1">
    <citation type="submission" date="2008-04" db="EMBL/GenBank/DDBJ databases">
        <title>Complete sequence of Yersinia pseudotuberculosis PB1/+.</title>
        <authorList>
            <person name="Copeland A."/>
            <person name="Lucas S."/>
            <person name="Lapidus A."/>
            <person name="Glavina del Rio T."/>
            <person name="Dalin E."/>
            <person name="Tice H."/>
            <person name="Bruce D."/>
            <person name="Goodwin L."/>
            <person name="Pitluck S."/>
            <person name="Munk A.C."/>
            <person name="Brettin T."/>
            <person name="Detter J.C."/>
            <person name="Han C."/>
            <person name="Tapia R."/>
            <person name="Schmutz J."/>
            <person name="Larimer F."/>
            <person name="Land M."/>
            <person name="Hauser L."/>
            <person name="Challacombe J.F."/>
            <person name="Green L."/>
            <person name="Lindler L.E."/>
            <person name="Nikolich M.P."/>
            <person name="Richardson P."/>
        </authorList>
    </citation>
    <scope>NUCLEOTIDE SEQUENCE [LARGE SCALE GENOMIC DNA]</scope>
    <source>
        <strain>PB1/+</strain>
    </source>
</reference>
<proteinExistence type="inferred from homology"/>
<name>CCME_YERPB</name>
<dbReference type="EMBL" id="CP001048">
    <property type="protein sequence ID" value="ACC89702.1"/>
    <property type="molecule type" value="Genomic_DNA"/>
</dbReference>
<dbReference type="RefSeq" id="WP_002209697.1">
    <property type="nucleotide sequence ID" value="NZ_CP009780.1"/>
</dbReference>
<dbReference type="SMR" id="B2K8K4"/>
<dbReference type="GeneID" id="57975951"/>
<dbReference type="KEGG" id="ypb:YPTS_2742"/>
<dbReference type="PATRIC" id="fig|502801.10.peg.2165"/>
<dbReference type="GO" id="GO:0005886">
    <property type="term" value="C:plasma membrane"/>
    <property type="evidence" value="ECO:0007669"/>
    <property type="project" value="UniProtKB-SubCell"/>
</dbReference>
<dbReference type="GO" id="GO:0020037">
    <property type="term" value="F:heme binding"/>
    <property type="evidence" value="ECO:0007669"/>
    <property type="project" value="InterPro"/>
</dbReference>
<dbReference type="GO" id="GO:0046872">
    <property type="term" value="F:metal ion binding"/>
    <property type="evidence" value="ECO:0007669"/>
    <property type="project" value="UniProtKB-KW"/>
</dbReference>
<dbReference type="GO" id="GO:0017004">
    <property type="term" value="P:cytochrome complex assembly"/>
    <property type="evidence" value="ECO:0007669"/>
    <property type="project" value="UniProtKB-KW"/>
</dbReference>
<dbReference type="FunFam" id="2.40.50.140:FF:000104">
    <property type="entry name" value="Cytochrome c-type biogenesis protein CcmE"/>
    <property type="match status" value="1"/>
</dbReference>
<dbReference type="Gene3D" id="2.40.50.140">
    <property type="entry name" value="Nucleic acid-binding proteins"/>
    <property type="match status" value="1"/>
</dbReference>
<dbReference type="HAMAP" id="MF_01959">
    <property type="entry name" value="CcmE"/>
    <property type="match status" value="1"/>
</dbReference>
<dbReference type="InterPro" id="IPR004329">
    <property type="entry name" value="CcmE"/>
</dbReference>
<dbReference type="InterPro" id="IPR036127">
    <property type="entry name" value="CcmE-like_sf"/>
</dbReference>
<dbReference type="InterPro" id="IPR012340">
    <property type="entry name" value="NA-bd_OB-fold"/>
</dbReference>
<dbReference type="NCBIfam" id="NF009635">
    <property type="entry name" value="PRK13150.1"/>
    <property type="match status" value="1"/>
</dbReference>
<dbReference type="NCBIfam" id="NF009638">
    <property type="entry name" value="PRK13165.1"/>
    <property type="match status" value="1"/>
</dbReference>
<dbReference type="NCBIfam" id="NF009727">
    <property type="entry name" value="PRK13254.1-1"/>
    <property type="match status" value="1"/>
</dbReference>
<dbReference type="NCBIfam" id="NF009729">
    <property type="entry name" value="PRK13254.1-3"/>
    <property type="match status" value="1"/>
</dbReference>
<dbReference type="NCBIfam" id="NF009731">
    <property type="entry name" value="PRK13254.1-5"/>
    <property type="match status" value="1"/>
</dbReference>
<dbReference type="PANTHER" id="PTHR34128">
    <property type="entry name" value="CYTOCHROME C-TYPE BIOGENESIS PROTEIN CCME HOMOLOG, MITOCHONDRIAL"/>
    <property type="match status" value="1"/>
</dbReference>
<dbReference type="PANTHER" id="PTHR34128:SF2">
    <property type="entry name" value="CYTOCHROME C-TYPE BIOGENESIS PROTEIN CCME HOMOLOG, MITOCHONDRIAL"/>
    <property type="match status" value="1"/>
</dbReference>
<dbReference type="Pfam" id="PF03100">
    <property type="entry name" value="CcmE"/>
    <property type="match status" value="1"/>
</dbReference>
<dbReference type="SUPFAM" id="SSF82093">
    <property type="entry name" value="Heme chaperone CcmE"/>
    <property type="match status" value="1"/>
</dbReference>
<keyword id="KW-0997">Cell inner membrane</keyword>
<keyword id="KW-1003">Cell membrane</keyword>
<keyword id="KW-0201">Cytochrome c-type biogenesis</keyword>
<keyword id="KW-0349">Heme</keyword>
<keyword id="KW-0408">Iron</keyword>
<keyword id="KW-0472">Membrane</keyword>
<keyword id="KW-0479">Metal-binding</keyword>
<keyword id="KW-0735">Signal-anchor</keyword>
<keyword id="KW-0812">Transmembrane</keyword>
<keyword id="KW-1133">Transmembrane helix</keyword>
<evidence type="ECO:0000255" key="1">
    <source>
        <dbReference type="HAMAP-Rule" id="MF_01959"/>
    </source>
</evidence>
<evidence type="ECO:0000256" key="2">
    <source>
        <dbReference type="SAM" id="MobiDB-lite"/>
    </source>
</evidence>
<comment type="function">
    <text evidence="1">Heme chaperone required for the biogenesis of c-type cytochromes. Transiently binds heme delivered by CcmC and transfers the heme to apo-cytochromes in a process facilitated by CcmF and CcmH.</text>
</comment>
<comment type="subcellular location">
    <subcellularLocation>
        <location evidence="1">Cell inner membrane</location>
        <topology evidence="1">Single-pass type II membrane protein</topology>
        <orientation evidence="1">Periplasmic side</orientation>
    </subcellularLocation>
</comment>
<comment type="similarity">
    <text evidence="1">Belongs to the CcmE/CycJ family.</text>
</comment>
<gene>
    <name evidence="1" type="primary">ccmE</name>
    <name evidence="1" type="synonym">cycJ</name>
    <name type="ordered locus">YPTS_2742</name>
</gene>
<sequence length="164" mass="18033">MNPRRKSRLYLAMVVLIGISLTTTLVLYALRSNIDLFYTPGEILQGKGERHEKPAIGQRLRIGGMVMPGSVQRDAKTLEMSFQVYDARGAVTVTYTGILPDLFREGQGVVAQGVFAEGNTVHAKEVLAKHDEKYTPPEVEEAMKENHSRPAAAYRGTNTTGNAL</sequence>
<feature type="chain" id="PRO_1000189062" description="Cytochrome c-type biogenesis protein CcmE">
    <location>
        <begin position="1"/>
        <end position="164"/>
    </location>
</feature>
<feature type="topological domain" description="Cytoplasmic" evidence="1">
    <location>
        <begin position="1"/>
        <end position="8"/>
    </location>
</feature>
<feature type="transmembrane region" description="Helical; Signal-anchor for type II membrane protein" evidence="1">
    <location>
        <begin position="9"/>
        <end position="29"/>
    </location>
</feature>
<feature type="topological domain" description="Periplasmic" evidence="1">
    <location>
        <begin position="30"/>
        <end position="164"/>
    </location>
</feature>
<feature type="region of interest" description="Disordered" evidence="2">
    <location>
        <begin position="140"/>
        <end position="164"/>
    </location>
</feature>
<feature type="binding site" description="covalent" evidence="1">
    <location>
        <position position="130"/>
    </location>
    <ligand>
        <name>heme</name>
        <dbReference type="ChEBI" id="CHEBI:30413"/>
    </ligand>
</feature>
<feature type="binding site" description="axial binding residue" evidence="1">
    <location>
        <position position="134"/>
    </location>
    <ligand>
        <name>heme</name>
        <dbReference type="ChEBI" id="CHEBI:30413"/>
    </ligand>
    <ligandPart>
        <name>Fe</name>
        <dbReference type="ChEBI" id="CHEBI:18248"/>
    </ligandPart>
</feature>
<organism>
    <name type="scientific">Yersinia pseudotuberculosis serotype IB (strain PB1/+)</name>
    <dbReference type="NCBI Taxonomy" id="502801"/>
    <lineage>
        <taxon>Bacteria</taxon>
        <taxon>Pseudomonadati</taxon>
        <taxon>Pseudomonadota</taxon>
        <taxon>Gammaproteobacteria</taxon>
        <taxon>Enterobacterales</taxon>
        <taxon>Yersiniaceae</taxon>
        <taxon>Yersinia</taxon>
    </lineage>
</organism>